<keyword id="KW-0963">Cytoplasm</keyword>
<keyword id="KW-0378">Hydrolase</keyword>
<keyword id="KW-0540">Nuclease</keyword>
<keyword id="KW-0690">Ribosome biogenesis</keyword>
<comment type="function">
    <text evidence="1">Could be a nuclease involved in processing of the 5'-end of pre-16S rRNA.</text>
</comment>
<comment type="subcellular location">
    <subcellularLocation>
        <location evidence="1">Cytoplasm</location>
    </subcellularLocation>
</comment>
<comment type="similarity">
    <text evidence="1">Belongs to the YqgF nuclease family.</text>
</comment>
<gene>
    <name type="ordered locus">XfasM23_1360</name>
</gene>
<proteinExistence type="inferred from homology"/>
<dbReference type="EC" id="3.1.-.-" evidence="1"/>
<dbReference type="EMBL" id="CP001011">
    <property type="protein sequence ID" value="ACB92778.1"/>
    <property type="molecule type" value="Genomic_DNA"/>
</dbReference>
<dbReference type="SMR" id="B2I5Y9"/>
<dbReference type="KEGG" id="xfn:XfasM23_1360"/>
<dbReference type="HOGENOM" id="CLU_098240_3_2_6"/>
<dbReference type="Proteomes" id="UP000001698">
    <property type="component" value="Chromosome"/>
</dbReference>
<dbReference type="GO" id="GO:0005829">
    <property type="term" value="C:cytosol"/>
    <property type="evidence" value="ECO:0007669"/>
    <property type="project" value="TreeGrafter"/>
</dbReference>
<dbReference type="GO" id="GO:0004518">
    <property type="term" value="F:nuclease activity"/>
    <property type="evidence" value="ECO:0007669"/>
    <property type="project" value="UniProtKB-KW"/>
</dbReference>
<dbReference type="GO" id="GO:0000967">
    <property type="term" value="P:rRNA 5'-end processing"/>
    <property type="evidence" value="ECO:0007669"/>
    <property type="project" value="UniProtKB-UniRule"/>
</dbReference>
<dbReference type="CDD" id="cd16964">
    <property type="entry name" value="YqgF"/>
    <property type="match status" value="1"/>
</dbReference>
<dbReference type="Gene3D" id="3.30.420.140">
    <property type="entry name" value="YqgF/RNase H-like domain"/>
    <property type="match status" value="1"/>
</dbReference>
<dbReference type="HAMAP" id="MF_00651">
    <property type="entry name" value="Nuclease_YqgF"/>
    <property type="match status" value="1"/>
</dbReference>
<dbReference type="InterPro" id="IPR012337">
    <property type="entry name" value="RNaseH-like_sf"/>
</dbReference>
<dbReference type="InterPro" id="IPR005227">
    <property type="entry name" value="YqgF"/>
</dbReference>
<dbReference type="InterPro" id="IPR006641">
    <property type="entry name" value="YqgF/RNaseH-like_dom"/>
</dbReference>
<dbReference type="InterPro" id="IPR037027">
    <property type="entry name" value="YqgF/RNaseH-like_dom_sf"/>
</dbReference>
<dbReference type="NCBIfam" id="TIGR00250">
    <property type="entry name" value="RNAse_H_YqgF"/>
    <property type="match status" value="1"/>
</dbReference>
<dbReference type="PANTHER" id="PTHR33317">
    <property type="entry name" value="POLYNUCLEOTIDYL TRANSFERASE, RIBONUCLEASE H-LIKE SUPERFAMILY PROTEIN"/>
    <property type="match status" value="1"/>
</dbReference>
<dbReference type="PANTHER" id="PTHR33317:SF4">
    <property type="entry name" value="POLYNUCLEOTIDYL TRANSFERASE, RIBONUCLEASE H-LIKE SUPERFAMILY PROTEIN"/>
    <property type="match status" value="1"/>
</dbReference>
<dbReference type="Pfam" id="PF03652">
    <property type="entry name" value="RuvX"/>
    <property type="match status" value="1"/>
</dbReference>
<dbReference type="SMART" id="SM00732">
    <property type="entry name" value="YqgFc"/>
    <property type="match status" value="1"/>
</dbReference>
<dbReference type="SUPFAM" id="SSF53098">
    <property type="entry name" value="Ribonuclease H-like"/>
    <property type="match status" value="1"/>
</dbReference>
<sequence>MPEASSPFPDGIVLGFDVGTRRIGVAVGSALGAGARAVAVIDVHGVAVDWNALDRVKRNWLPVGLVVGDPLTLEGHDQPIRKQAHAFACQLRERYRLPVVLVDERSSSVEAASRFAGARAAGYKRRRDADTLDAIAAAVILERWLADPMQATSLP</sequence>
<name>YQGF_XYLF2</name>
<reference key="1">
    <citation type="journal article" date="2010" name="J. Bacteriol.">
        <title>Whole genome sequences of two Xylella fastidiosa strains (M12 and M23) causing almond leaf scorch disease in California.</title>
        <authorList>
            <person name="Chen J."/>
            <person name="Xie G."/>
            <person name="Han S."/>
            <person name="Chertkov O."/>
            <person name="Sims D."/>
            <person name="Civerolo E.L."/>
        </authorList>
    </citation>
    <scope>NUCLEOTIDE SEQUENCE [LARGE SCALE GENOMIC DNA]</scope>
    <source>
        <strain>M23</strain>
    </source>
</reference>
<protein>
    <recommendedName>
        <fullName evidence="1">Putative pre-16S rRNA nuclease</fullName>
        <ecNumber evidence="1">3.1.-.-</ecNumber>
    </recommendedName>
</protein>
<accession>B2I5Y9</accession>
<organism>
    <name type="scientific">Xylella fastidiosa (strain M23)</name>
    <dbReference type="NCBI Taxonomy" id="405441"/>
    <lineage>
        <taxon>Bacteria</taxon>
        <taxon>Pseudomonadati</taxon>
        <taxon>Pseudomonadota</taxon>
        <taxon>Gammaproteobacteria</taxon>
        <taxon>Lysobacterales</taxon>
        <taxon>Lysobacteraceae</taxon>
        <taxon>Xylella</taxon>
    </lineage>
</organism>
<evidence type="ECO:0000255" key="1">
    <source>
        <dbReference type="HAMAP-Rule" id="MF_00651"/>
    </source>
</evidence>
<feature type="chain" id="PRO_1000131088" description="Putative pre-16S rRNA nuclease">
    <location>
        <begin position="1"/>
        <end position="155"/>
    </location>
</feature>